<proteinExistence type="evidence at protein level"/>
<accession>Q26454</accession>
<accession>Q9V4M5</accession>
<evidence type="ECO:0000250" key="1"/>
<evidence type="ECO:0000255" key="2"/>
<evidence type="ECO:0000256" key="3">
    <source>
        <dbReference type="SAM" id="MobiDB-lite"/>
    </source>
</evidence>
<evidence type="ECO:0000269" key="4">
    <source>
    </source>
</evidence>
<evidence type="ECO:0000269" key="5">
    <source>
    </source>
</evidence>
<evidence type="ECO:0000269" key="6">
    <source>
    </source>
</evidence>
<evidence type="ECO:0000269" key="7">
    <source>
    </source>
</evidence>
<evidence type="ECO:0000269" key="8">
    <source>
    </source>
</evidence>
<evidence type="ECO:0000305" key="9"/>
<protein>
    <recommendedName>
        <fullName>DNA replication licensing factor MCM4</fullName>
        <ecNumber>3.6.4.12</ecNumber>
    </recommendedName>
    <alternativeName>
        <fullName>Protein disc proliferation abnormal</fullName>
    </alternativeName>
</protein>
<keyword id="KW-0002">3D-structure</keyword>
<keyword id="KW-0067">ATP-binding</keyword>
<keyword id="KW-0235">DNA replication</keyword>
<keyword id="KW-0238">DNA-binding</keyword>
<keyword id="KW-0347">Helicase</keyword>
<keyword id="KW-0378">Hydrolase</keyword>
<keyword id="KW-0547">Nucleotide-binding</keyword>
<keyword id="KW-0539">Nucleus</keyword>
<keyword id="KW-0597">Phosphoprotein</keyword>
<keyword id="KW-1185">Reference proteome</keyword>
<gene>
    <name type="primary">dpa</name>
    <name type="ORF">CG1616</name>
</gene>
<dbReference type="EC" id="3.6.4.12"/>
<dbReference type="EMBL" id="S80255">
    <property type="protein sequence ID" value="AAB35644.1"/>
    <property type="molecule type" value="mRNA"/>
</dbReference>
<dbReference type="EMBL" id="AE013599">
    <property type="protein sequence ID" value="AAF59242.1"/>
    <property type="molecule type" value="Genomic_DNA"/>
</dbReference>
<dbReference type="PIR" id="S59872">
    <property type="entry name" value="S59872"/>
</dbReference>
<dbReference type="RefSeq" id="NP_001286160.1">
    <property type="nucleotide sequence ID" value="NM_001299231.1"/>
</dbReference>
<dbReference type="RefSeq" id="NP_477185.1">
    <property type="nucleotide sequence ID" value="NM_057837.5"/>
</dbReference>
<dbReference type="PDB" id="6RAW">
    <property type="method" value="EM"/>
    <property type="resolution" value="3.70 A"/>
    <property type="chains" value="4=1-866"/>
</dbReference>
<dbReference type="PDB" id="6RAX">
    <property type="method" value="EM"/>
    <property type="resolution" value="3.99 A"/>
    <property type="chains" value="4=1-866"/>
</dbReference>
<dbReference type="PDB" id="6RAY">
    <property type="method" value="EM"/>
    <property type="resolution" value="4.28 A"/>
    <property type="chains" value="4=1-866"/>
</dbReference>
<dbReference type="PDB" id="6RAZ">
    <property type="method" value="EM"/>
    <property type="resolution" value="4.46 A"/>
    <property type="chains" value="4=1-866"/>
</dbReference>
<dbReference type="PDBsum" id="6RAW"/>
<dbReference type="PDBsum" id="6RAX"/>
<dbReference type="PDBsum" id="6RAY"/>
<dbReference type="PDBsum" id="6RAZ"/>
<dbReference type="EMDB" id="EMD-2772"/>
<dbReference type="EMDB" id="EMD-3318"/>
<dbReference type="EMDB" id="EMD-3319"/>
<dbReference type="EMDB" id="EMD-3320"/>
<dbReference type="EMDB" id="EMD-3321"/>
<dbReference type="EMDB" id="EMD-4785"/>
<dbReference type="EMDB" id="EMD-4786"/>
<dbReference type="EMDB" id="EMD-4787"/>
<dbReference type="EMDB" id="EMD-4788"/>
<dbReference type="SMR" id="Q26454"/>
<dbReference type="BioGRID" id="61555">
    <property type="interactions" value="17"/>
</dbReference>
<dbReference type="ComplexPortal" id="CPX-2942">
    <property type="entry name" value="MCM complex"/>
</dbReference>
<dbReference type="DIP" id="DIP-35346N"/>
<dbReference type="FunCoup" id="Q26454">
    <property type="interactions" value="1275"/>
</dbReference>
<dbReference type="IntAct" id="Q26454">
    <property type="interactions" value="20"/>
</dbReference>
<dbReference type="STRING" id="7227.FBpp0311783"/>
<dbReference type="iPTMnet" id="Q26454"/>
<dbReference type="PaxDb" id="7227-FBpp0088055"/>
<dbReference type="EnsemblMetazoa" id="FBtr0088982">
    <property type="protein sequence ID" value="FBpp0088055"/>
    <property type="gene ID" value="FBgn0015929"/>
</dbReference>
<dbReference type="EnsemblMetazoa" id="FBtr0345797">
    <property type="protein sequence ID" value="FBpp0311783"/>
    <property type="gene ID" value="FBgn0015929"/>
</dbReference>
<dbReference type="GeneID" id="35679"/>
<dbReference type="KEGG" id="dme:Dmel_CG1616"/>
<dbReference type="AGR" id="FB:FBgn0015929"/>
<dbReference type="CTD" id="103997"/>
<dbReference type="FlyBase" id="FBgn0015929">
    <property type="gene designation" value="dpa"/>
</dbReference>
<dbReference type="VEuPathDB" id="VectorBase:FBgn0015929"/>
<dbReference type="eggNOG" id="KOG0478">
    <property type="taxonomic scope" value="Eukaryota"/>
</dbReference>
<dbReference type="GeneTree" id="ENSGT01110000267230"/>
<dbReference type="HOGENOM" id="CLU_000995_7_1_1"/>
<dbReference type="InParanoid" id="Q26454"/>
<dbReference type="OMA" id="AFFKCNV"/>
<dbReference type="OrthoDB" id="10251574at2759"/>
<dbReference type="PhylomeDB" id="Q26454"/>
<dbReference type="Reactome" id="R-DME-176187">
    <property type="pathway name" value="Activation of ATR in response to replication stress"/>
</dbReference>
<dbReference type="Reactome" id="R-DME-68867">
    <property type="pathway name" value="Assembly of the pre-replicative complex"/>
</dbReference>
<dbReference type="Reactome" id="R-DME-68949">
    <property type="pathway name" value="Orc1 removal from chromatin"/>
</dbReference>
<dbReference type="Reactome" id="R-DME-68962">
    <property type="pathway name" value="Activation of the pre-replicative complex"/>
</dbReference>
<dbReference type="Reactome" id="R-DME-69052">
    <property type="pathway name" value="Switching of origins to a post-replicative state"/>
</dbReference>
<dbReference type="BioGRID-ORCS" id="35679">
    <property type="hits" value="0 hits in 1 CRISPR screen"/>
</dbReference>
<dbReference type="GenomeRNAi" id="35679"/>
<dbReference type="PRO" id="PR:Q26454"/>
<dbReference type="Proteomes" id="UP000000803">
    <property type="component" value="Chromosome 2R"/>
</dbReference>
<dbReference type="Bgee" id="FBgn0015929">
    <property type="expression patterns" value="Expressed in secondary oocyte and 57 other cell types or tissues"/>
</dbReference>
<dbReference type="ExpressionAtlas" id="Q26454">
    <property type="expression patterns" value="baseline and differential"/>
</dbReference>
<dbReference type="GO" id="GO:0071162">
    <property type="term" value="C:CMG complex"/>
    <property type="evidence" value="ECO:0000314"/>
    <property type="project" value="FlyBase"/>
</dbReference>
<dbReference type="GO" id="GO:0042555">
    <property type="term" value="C:MCM complex"/>
    <property type="evidence" value="ECO:0000314"/>
    <property type="project" value="FlyBase"/>
</dbReference>
<dbReference type="GO" id="GO:0005634">
    <property type="term" value="C:nucleus"/>
    <property type="evidence" value="ECO:0000318"/>
    <property type="project" value="GO_Central"/>
</dbReference>
<dbReference type="GO" id="GO:0005524">
    <property type="term" value="F:ATP binding"/>
    <property type="evidence" value="ECO:0007669"/>
    <property type="project" value="UniProtKB-KW"/>
</dbReference>
<dbReference type="GO" id="GO:0016887">
    <property type="term" value="F:ATP hydrolysis activity"/>
    <property type="evidence" value="ECO:0007669"/>
    <property type="project" value="InterPro"/>
</dbReference>
<dbReference type="GO" id="GO:0003678">
    <property type="term" value="F:DNA helicase activity"/>
    <property type="evidence" value="ECO:0007669"/>
    <property type="project" value="InterPro"/>
</dbReference>
<dbReference type="GO" id="GO:0003697">
    <property type="term" value="F:single-stranded DNA binding"/>
    <property type="evidence" value="ECO:0000318"/>
    <property type="project" value="GO_Central"/>
</dbReference>
<dbReference type="GO" id="GO:0006260">
    <property type="term" value="P:DNA replication"/>
    <property type="evidence" value="ECO:0000315"/>
    <property type="project" value="FlyBase"/>
</dbReference>
<dbReference type="GO" id="GO:0006271">
    <property type="term" value="P:DNA strand elongation involved in DNA replication"/>
    <property type="evidence" value="ECO:0000318"/>
    <property type="project" value="GO_Central"/>
</dbReference>
<dbReference type="GO" id="GO:0000727">
    <property type="term" value="P:double-strand break repair via break-induced replication"/>
    <property type="evidence" value="ECO:0000318"/>
    <property type="project" value="GO_Central"/>
</dbReference>
<dbReference type="GO" id="GO:1902975">
    <property type="term" value="P:mitotic DNA replication initiation"/>
    <property type="evidence" value="ECO:0000318"/>
    <property type="project" value="GO_Central"/>
</dbReference>
<dbReference type="GO" id="GO:0007052">
    <property type="term" value="P:mitotic spindle organization"/>
    <property type="evidence" value="ECO:0000315"/>
    <property type="project" value="FlyBase"/>
</dbReference>
<dbReference type="GO" id="GO:0006279">
    <property type="term" value="P:premeiotic DNA replication"/>
    <property type="evidence" value="ECO:0000303"/>
    <property type="project" value="ComplexPortal"/>
</dbReference>
<dbReference type="CDD" id="cd17755">
    <property type="entry name" value="MCM4"/>
    <property type="match status" value="1"/>
</dbReference>
<dbReference type="FunFam" id="1.10.10.10:FF:000597">
    <property type="entry name" value="DNA helicase"/>
    <property type="match status" value="1"/>
</dbReference>
<dbReference type="FunFam" id="2.20.28.10:FF:000003">
    <property type="entry name" value="DNA helicase"/>
    <property type="match status" value="1"/>
</dbReference>
<dbReference type="FunFam" id="3.30.1640.10:FF:000001">
    <property type="entry name" value="DNA helicase"/>
    <property type="match status" value="1"/>
</dbReference>
<dbReference type="FunFam" id="3.40.50.300:FF:000217">
    <property type="entry name" value="DNA helicase"/>
    <property type="match status" value="1"/>
</dbReference>
<dbReference type="Gene3D" id="2.20.28.10">
    <property type="match status" value="1"/>
</dbReference>
<dbReference type="Gene3D" id="3.30.1640.10">
    <property type="entry name" value="mini-chromosome maintenance (MCM) complex, chain A, domain 1"/>
    <property type="match status" value="1"/>
</dbReference>
<dbReference type="Gene3D" id="2.40.50.140">
    <property type="entry name" value="Nucleic acid-binding proteins"/>
    <property type="match status" value="1"/>
</dbReference>
<dbReference type="Gene3D" id="3.40.50.300">
    <property type="entry name" value="P-loop containing nucleotide triphosphate hydrolases"/>
    <property type="match status" value="1"/>
</dbReference>
<dbReference type="Gene3D" id="1.10.10.10">
    <property type="entry name" value="Winged helix-like DNA-binding domain superfamily/Winged helix DNA-binding domain"/>
    <property type="match status" value="1"/>
</dbReference>
<dbReference type="InterPro" id="IPR003593">
    <property type="entry name" value="AAA+_ATPase"/>
</dbReference>
<dbReference type="InterPro" id="IPR031327">
    <property type="entry name" value="MCM"/>
</dbReference>
<dbReference type="InterPro" id="IPR008047">
    <property type="entry name" value="MCM_4"/>
</dbReference>
<dbReference type="InterPro" id="IPR018525">
    <property type="entry name" value="MCM_CS"/>
</dbReference>
<dbReference type="InterPro" id="IPR001208">
    <property type="entry name" value="MCM_dom"/>
</dbReference>
<dbReference type="InterPro" id="IPR041562">
    <property type="entry name" value="MCM_lid"/>
</dbReference>
<dbReference type="InterPro" id="IPR027925">
    <property type="entry name" value="MCM_N"/>
</dbReference>
<dbReference type="InterPro" id="IPR033762">
    <property type="entry name" value="MCM_OB"/>
</dbReference>
<dbReference type="InterPro" id="IPR012340">
    <property type="entry name" value="NA-bd_OB-fold"/>
</dbReference>
<dbReference type="InterPro" id="IPR027417">
    <property type="entry name" value="P-loop_NTPase"/>
</dbReference>
<dbReference type="InterPro" id="IPR036388">
    <property type="entry name" value="WH-like_DNA-bd_sf"/>
</dbReference>
<dbReference type="PANTHER" id="PTHR11630">
    <property type="entry name" value="DNA REPLICATION LICENSING FACTOR MCM FAMILY MEMBER"/>
    <property type="match status" value="1"/>
</dbReference>
<dbReference type="PANTHER" id="PTHR11630:SF66">
    <property type="entry name" value="DNA REPLICATION LICENSING FACTOR MCM4"/>
    <property type="match status" value="1"/>
</dbReference>
<dbReference type="Pfam" id="PF00493">
    <property type="entry name" value="MCM"/>
    <property type="match status" value="1"/>
</dbReference>
<dbReference type="Pfam" id="PF21128">
    <property type="entry name" value="MCM4_WHD"/>
    <property type="match status" value="1"/>
</dbReference>
<dbReference type="Pfam" id="PF17855">
    <property type="entry name" value="MCM_lid"/>
    <property type="match status" value="1"/>
</dbReference>
<dbReference type="Pfam" id="PF14551">
    <property type="entry name" value="MCM_N"/>
    <property type="match status" value="1"/>
</dbReference>
<dbReference type="Pfam" id="PF17207">
    <property type="entry name" value="MCM_OB"/>
    <property type="match status" value="1"/>
</dbReference>
<dbReference type="PRINTS" id="PR01657">
    <property type="entry name" value="MCMFAMILY"/>
</dbReference>
<dbReference type="PRINTS" id="PR01660">
    <property type="entry name" value="MCMPROTEIN4"/>
</dbReference>
<dbReference type="SMART" id="SM00382">
    <property type="entry name" value="AAA"/>
    <property type="match status" value="1"/>
</dbReference>
<dbReference type="SMART" id="SM00350">
    <property type="entry name" value="MCM"/>
    <property type="match status" value="1"/>
</dbReference>
<dbReference type="SUPFAM" id="SSF50249">
    <property type="entry name" value="Nucleic acid-binding proteins"/>
    <property type="match status" value="1"/>
</dbReference>
<dbReference type="SUPFAM" id="SSF52540">
    <property type="entry name" value="P-loop containing nucleoside triphosphate hydrolases"/>
    <property type="match status" value="1"/>
</dbReference>
<dbReference type="PROSITE" id="PS00847">
    <property type="entry name" value="MCM_1"/>
    <property type="match status" value="1"/>
</dbReference>
<dbReference type="PROSITE" id="PS50051">
    <property type="entry name" value="MCM_2"/>
    <property type="match status" value="1"/>
</dbReference>
<sequence>MSSPARSPSVGGATPKQGARTPTRGIASQDVETPMRMGPGRAVRPSDNISLPPTSPGNISLPATSPARGLGANMSEIDLSSPLNYGTPSSMGSIRTPRSGIRGTPLRARPDIRTDKRIRQVAIGGGSGLEPIPEKGSETTDPVSESSQAPQLVVWGTNVVVSQCKSKFKSFIMRFIDPSAEQDEISENIDVNQPLYLQKLEEIHTLEEPYLNLNCAHLKTFDQDLYRQLICYPQEVIPGFDMAINEMFFERYPAALLEHQIQVRPFNADKTRNMRSLNPEDMDQLISISGMVIRSSNVIPEMREAFFSCNICSFSTTVEVDRGRINQPTLCTNCNTNHCFRLIHNRSEFTDKQLVKLQESPDDMAAGQTPHNVLLYAHNDLVDKVQPGDRVTVTGIYRATPLKTGGLSSSVKSVYKTHVDVVHFRKVDNKRLYEDEEGKDHIFPPERVELLQLLAKKPDIYDRLARAIAPSIYENDDIKKGILLQLFGGTKKKHATLGRQNFRSEIHLLLCGDPGTSKSQMLQYVFNLVPRSQYTSGRGSSAVGLTAYVTKDPETRQLVLQTGALVLADNGVCCIDEFDKMNDSTRSVLHEVMEQQTLSIAKAGIICQLNARTSILAAANPAESQWNKRKNIIDNVQLPHTLLSRFDLIFLVLDPQDEIFDKRLASHLVSLYYVTRHEEEDTMFDMSVLRDYIAYAREHLSPTLSDEAQQRLIQAYVDMRKVGAGRGQISAYPRQLESLIRLSEAHAKVRLSNQVELLDVEEAWRLHREALKQSATDPLSGKIDVGILTTGLSTAARKKRADLVAAIKENLKKKGKVLTVPYQKLFSDIKEGSQIMITREQFEDALKEVQDEGAIVVMGKNTIRIC</sequence>
<organism>
    <name type="scientific">Drosophila melanogaster</name>
    <name type="common">Fruit fly</name>
    <dbReference type="NCBI Taxonomy" id="7227"/>
    <lineage>
        <taxon>Eukaryota</taxon>
        <taxon>Metazoa</taxon>
        <taxon>Ecdysozoa</taxon>
        <taxon>Arthropoda</taxon>
        <taxon>Hexapoda</taxon>
        <taxon>Insecta</taxon>
        <taxon>Pterygota</taxon>
        <taxon>Neoptera</taxon>
        <taxon>Endopterygota</taxon>
        <taxon>Diptera</taxon>
        <taxon>Brachycera</taxon>
        <taxon>Muscomorpha</taxon>
        <taxon>Ephydroidea</taxon>
        <taxon>Drosophilidae</taxon>
        <taxon>Drosophila</taxon>
        <taxon>Sophophora</taxon>
    </lineage>
</organism>
<name>MCM4_DROME</name>
<feature type="chain" id="PRO_0000194104" description="DNA replication licensing factor MCM4">
    <location>
        <begin position="1"/>
        <end position="866"/>
    </location>
</feature>
<feature type="domain" description="MCM">
    <location>
        <begin position="460"/>
        <end position="669"/>
    </location>
</feature>
<feature type="region of interest" description="Disordered" evidence="3">
    <location>
        <begin position="1"/>
        <end position="67"/>
    </location>
</feature>
<feature type="region of interest" description="Disordered" evidence="3">
    <location>
        <begin position="81"/>
        <end position="107"/>
    </location>
</feature>
<feature type="region of interest" description="Disordered" evidence="3">
    <location>
        <begin position="124"/>
        <end position="145"/>
    </location>
</feature>
<feature type="short sequence motif" description="Arginine finger">
    <location>
        <begin position="644"/>
        <end position="647"/>
    </location>
</feature>
<feature type="compositionally biased region" description="Polar residues" evidence="3">
    <location>
        <begin position="47"/>
        <end position="63"/>
    </location>
</feature>
<feature type="compositionally biased region" description="Polar residues" evidence="3">
    <location>
        <begin position="81"/>
        <end position="93"/>
    </location>
</feature>
<feature type="binding site" evidence="2">
    <location>
        <begin position="512"/>
        <end position="519"/>
    </location>
    <ligand>
        <name>ATP</name>
        <dbReference type="ChEBI" id="CHEBI:30616"/>
    </ligand>
</feature>
<feature type="modified residue" description="Phosphoserine" evidence="5 6">
    <location>
        <position position="55"/>
    </location>
</feature>
<feature type="modified residue" description="Phosphoserine" evidence="6">
    <location>
        <position position="81"/>
    </location>
</feature>
<feature type="modified residue" description="Phosphothreonine" evidence="6">
    <location>
        <position position="87"/>
    </location>
</feature>
<feature type="mutagenesis site" description="Slightly reduces complex helicase activity." evidence="7">
    <original>K</original>
    <variation>A</variation>
    <location>
        <position position="518"/>
    </location>
</feature>
<feature type="sequence conflict" description="In Ref. 1; AAB35644." evidence="9" ref="1">
    <original>D</original>
    <variation>E</variation>
    <location>
        <position position="435"/>
    </location>
</feature>
<comment type="function">
    <text evidence="4 7">Acts as a component of the Mcm2-7 complex (Mcm complex) which is the putative replicative helicase essential for 'once per cell cycle' DNA replication initiation and elongation in eukaryotic cells. The active ATPase sites in the Mcm2-7 ring are formed through the interaction surfaces of two neighboring subunits such that a critical structure of a conserved arginine finger motif is provided in trans relative to the ATP-binding site of the Walker A box of the adjacent subunit. The six ATPase active sites, however, are likely to contribute differentially to the complex helicase activity. Required for DNA replication and cell proliferation. Essential role in mitotic DNA replication but not in endoreplication.</text>
</comment>
<comment type="catalytic activity">
    <reaction>
        <text>ATP + H2O = ADP + phosphate + H(+)</text>
        <dbReference type="Rhea" id="RHEA:13065"/>
        <dbReference type="ChEBI" id="CHEBI:15377"/>
        <dbReference type="ChEBI" id="CHEBI:15378"/>
        <dbReference type="ChEBI" id="CHEBI:30616"/>
        <dbReference type="ChEBI" id="CHEBI:43474"/>
        <dbReference type="ChEBI" id="CHEBI:456216"/>
        <dbReference type="EC" id="3.6.4.12"/>
    </reaction>
</comment>
<comment type="subunit">
    <text evidence="4 9">Component of the Mcm2-7 complex. The complex forms a toroidal hexameric ring with the proposed subunit order Mcm2-Mcm6-Mcm4-Mcm7-Mcm3-Mcm5 (Probable).</text>
</comment>
<comment type="interaction">
    <interactant intactId="EBI-175772">
        <id>Q26454</id>
    </interactant>
    <interactant intactId="EBI-869161">
        <id>Q9V461</id>
        <label>Mcm6</label>
    </interactant>
    <organismsDiffer>false</organismsDiffer>
    <experiments>4</experiments>
</comment>
<comment type="subcellular location">
    <subcellularLocation>
        <location evidence="1">Nucleus</location>
    </subcellularLocation>
</comment>
<comment type="PTM">
    <text evidence="8">Phosphorylated by the catalytic component of the Dbf4-dependent kinase (DDK) complex Cdc7.</text>
</comment>
<comment type="similarity">
    <text evidence="9">Belongs to the MCM family.</text>
</comment>
<reference key="1">
    <citation type="journal article" date="1995" name="EMBO J.">
        <title>dpa, a member of the MCM family, is required for mitotic DNA replication but not endoreplication in Drosophila.</title>
        <authorList>
            <person name="Feger G."/>
            <person name="Vaessin H."/>
            <person name="Su T.T."/>
            <person name="Wolff E."/>
            <person name="Jan L.Y."/>
            <person name="Jan Y.N."/>
        </authorList>
    </citation>
    <scope>NUCLEOTIDE SEQUENCE [MRNA]</scope>
</reference>
<reference key="2">
    <citation type="journal article" date="2000" name="Science">
        <title>The genome sequence of Drosophila melanogaster.</title>
        <authorList>
            <person name="Adams M.D."/>
            <person name="Celniker S.E."/>
            <person name="Holt R.A."/>
            <person name="Evans C.A."/>
            <person name="Gocayne J.D."/>
            <person name="Amanatides P.G."/>
            <person name="Scherer S.E."/>
            <person name="Li P.W."/>
            <person name="Hoskins R.A."/>
            <person name="Galle R.F."/>
            <person name="George R.A."/>
            <person name="Lewis S.E."/>
            <person name="Richards S."/>
            <person name="Ashburner M."/>
            <person name="Henderson S.N."/>
            <person name="Sutton G.G."/>
            <person name="Wortman J.R."/>
            <person name="Yandell M.D."/>
            <person name="Zhang Q."/>
            <person name="Chen L.X."/>
            <person name="Brandon R.C."/>
            <person name="Rogers Y.-H.C."/>
            <person name="Blazej R.G."/>
            <person name="Champe M."/>
            <person name="Pfeiffer B.D."/>
            <person name="Wan K.H."/>
            <person name="Doyle C."/>
            <person name="Baxter E.G."/>
            <person name="Helt G."/>
            <person name="Nelson C.R."/>
            <person name="Miklos G.L.G."/>
            <person name="Abril J.F."/>
            <person name="Agbayani A."/>
            <person name="An H.-J."/>
            <person name="Andrews-Pfannkoch C."/>
            <person name="Baldwin D."/>
            <person name="Ballew R.M."/>
            <person name="Basu A."/>
            <person name="Baxendale J."/>
            <person name="Bayraktaroglu L."/>
            <person name="Beasley E.M."/>
            <person name="Beeson K.Y."/>
            <person name="Benos P.V."/>
            <person name="Berman B.P."/>
            <person name="Bhandari D."/>
            <person name="Bolshakov S."/>
            <person name="Borkova D."/>
            <person name="Botchan M.R."/>
            <person name="Bouck J."/>
            <person name="Brokstein P."/>
            <person name="Brottier P."/>
            <person name="Burtis K.C."/>
            <person name="Busam D.A."/>
            <person name="Butler H."/>
            <person name="Cadieu E."/>
            <person name="Center A."/>
            <person name="Chandra I."/>
            <person name="Cherry J.M."/>
            <person name="Cawley S."/>
            <person name="Dahlke C."/>
            <person name="Davenport L.B."/>
            <person name="Davies P."/>
            <person name="de Pablos B."/>
            <person name="Delcher A."/>
            <person name="Deng Z."/>
            <person name="Mays A.D."/>
            <person name="Dew I."/>
            <person name="Dietz S.M."/>
            <person name="Dodson K."/>
            <person name="Doup L.E."/>
            <person name="Downes M."/>
            <person name="Dugan-Rocha S."/>
            <person name="Dunkov B.C."/>
            <person name="Dunn P."/>
            <person name="Durbin K.J."/>
            <person name="Evangelista C.C."/>
            <person name="Ferraz C."/>
            <person name="Ferriera S."/>
            <person name="Fleischmann W."/>
            <person name="Fosler C."/>
            <person name="Gabrielian A.E."/>
            <person name="Garg N.S."/>
            <person name="Gelbart W.M."/>
            <person name="Glasser K."/>
            <person name="Glodek A."/>
            <person name="Gong F."/>
            <person name="Gorrell J.H."/>
            <person name="Gu Z."/>
            <person name="Guan P."/>
            <person name="Harris M."/>
            <person name="Harris N.L."/>
            <person name="Harvey D.A."/>
            <person name="Heiman T.J."/>
            <person name="Hernandez J.R."/>
            <person name="Houck J."/>
            <person name="Hostin D."/>
            <person name="Houston K.A."/>
            <person name="Howland T.J."/>
            <person name="Wei M.-H."/>
            <person name="Ibegwam C."/>
            <person name="Jalali M."/>
            <person name="Kalush F."/>
            <person name="Karpen G.H."/>
            <person name="Ke Z."/>
            <person name="Kennison J.A."/>
            <person name="Ketchum K.A."/>
            <person name="Kimmel B.E."/>
            <person name="Kodira C.D."/>
            <person name="Kraft C.L."/>
            <person name="Kravitz S."/>
            <person name="Kulp D."/>
            <person name="Lai Z."/>
            <person name="Lasko P."/>
            <person name="Lei Y."/>
            <person name="Levitsky A.A."/>
            <person name="Li J.H."/>
            <person name="Li Z."/>
            <person name="Liang Y."/>
            <person name="Lin X."/>
            <person name="Liu X."/>
            <person name="Mattei B."/>
            <person name="McIntosh T.C."/>
            <person name="McLeod M.P."/>
            <person name="McPherson D."/>
            <person name="Merkulov G."/>
            <person name="Milshina N.V."/>
            <person name="Mobarry C."/>
            <person name="Morris J."/>
            <person name="Moshrefi A."/>
            <person name="Mount S.M."/>
            <person name="Moy M."/>
            <person name="Murphy B."/>
            <person name="Murphy L."/>
            <person name="Muzny D.M."/>
            <person name="Nelson D.L."/>
            <person name="Nelson D.R."/>
            <person name="Nelson K.A."/>
            <person name="Nixon K."/>
            <person name="Nusskern D.R."/>
            <person name="Pacleb J.M."/>
            <person name="Palazzolo M."/>
            <person name="Pittman G.S."/>
            <person name="Pan S."/>
            <person name="Pollard J."/>
            <person name="Puri V."/>
            <person name="Reese M.G."/>
            <person name="Reinert K."/>
            <person name="Remington K."/>
            <person name="Saunders R.D.C."/>
            <person name="Scheeler F."/>
            <person name="Shen H."/>
            <person name="Shue B.C."/>
            <person name="Siden-Kiamos I."/>
            <person name="Simpson M."/>
            <person name="Skupski M.P."/>
            <person name="Smith T.J."/>
            <person name="Spier E."/>
            <person name="Spradling A.C."/>
            <person name="Stapleton M."/>
            <person name="Strong R."/>
            <person name="Sun E."/>
            <person name="Svirskas R."/>
            <person name="Tector C."/>
            <person name="Turner R."/>
            <person name="Venter E."/>
            <person name="Wang A.H."/>
            <person name="Wang X."/>
            <person name="Wang Z.-Y."/>
            <person name="Wassarman D.A."/>
            <person name="Weinstock G.M."/>
            <person name="Weissenbach J."/>
            <person name="Williams S.M."/>
            <person name="Woodage T."/>
            <person name="Worley K.C."/>
            <person name="Wu D."/>
            <person name="Yang S."/>
            <person name="Yao Q.A."/>
            <person name="Ye J."/>
            <person name="Yeh R.-F."/>
            <person name="Zaveri J.S."/>
            <person name="Zhan M."/>
            <person name="Zhang G."/>
            <person name="Zhao Q."/>
            <person name="Zheng L."/>
            <person name="Zheng X.H."/>
            <person name="Zhong F.N."/>
            <person name="Zhong W."/>
            <person name="Zhou X."/>
            <person name="Zhu S.C."/>
            <person name="Zhu X."/>
            <person name="Smith H.O."/>
            <person name="Gibbs R.A."/>
            <person name="Myers E.W."/>
            <person name="Rubin G.M."/>
            <person name="Venter J.C."/>
        </authorList>
    </citation>
    <scope>NUCLEOTIDE SEQUENCE [LARGE SCALE GENOMIC DNA]</scope>
    <source>
        <strain>Berkeley</strain>
    </source>
</reference>
<reference key="3">
    <citation type="journal article" date="2002" name="Genome Biol.">
        <title>Annotation of the Drosophila melanogaster euchromatic genome: a systematic review.</title>
        <authorList>
            <person name="Misra S."/>
            <person name="Crosby M.A."/>
            <person name="Mungall C.J."/>
            <person name="Matthews B.B."/>
            <person name="Campbell K.S."/>
            <person name="Hradecky P."/>
            <person name="Huang Y."/>
            <person name="Kaminker J.S."/>
            <person name="Millburn G.H."/>
            <person name="Prochnik S.E."/>
            <person name="Smith C.D."/>
            <person name="Tupy J.L."/>
            <person name="Whitfield E.J."/>
            <person name="Bayraktaroglu L."/>
            <person name="Berman B.P."/>
            <person name="Bettencourt B.R."/>
            <person name="Celniker S.E."/>
            <person name="de Grey A.D.N.J."/>
            <person name="Drysdale R.A."/>
            <person name="Harris N.L."/>
            <person name="Richter J."/>
            <person name="Russo S."/>
            <person name="Schroeder A.J."/>
            <person name="Shu S.Q."/>
            <person name="Stapleton M."/>
            <person name="Yamada C."/>
            <person name="Ashburner M."/>
            <person name="Gelbart W.M."/>
            <person name="Rubin G.M."/>
            <person name="Lewis S.E."/>
        </authorList>
    </citation>
    <scope>GENOME REANNOTATION</scope>
    <source>
        <strain>Berkeley</strain>
    </source>
</reference>
<reference key="4">
    <citation type="journal article" date="2006" name="Proc. Natl. Acad. Sci. U.S.A.">
        <title>Isolation of the Cdc45/Mcm2-7/GINS (CMG) complex, a candidate for the eukaryotic DNA replication fork helicase.</title>
        <authorList>
            <person name="Moyer S.E."/>
            <person name="Lewis P.W."/>
            <person name="Botchan M.R."/>
        </authorList>
    </citation>
    <scope>IDENTIFICATION IN THE MCM2-7 COMPLEX</scope>
    <scope>FUNCTION OF THE MCM2-7 COMPLEX</scope>
</reference>
<reference key="5">
    <citation type="journal article" date="2007" name="Mol. Biosyst.">
        <title>An integrated chemical, mass spectrometric and computational strategy for (quantitative) phosphoproteomics: application to Drosophila melanogaster Kc167 cells.</title>
        <authorList>
            <person name="Bodenmiller B."/>
            <person name="Mueller L.N."/>
            <person name="Pedrioli P.G.A."/>
            <person name="Pflieger D."/>
            <person name="Juenger M.A."/>
            <person name="Eng J.K."/>
            <person name="Aebersold R."/>
            <person name="Tao W.A."/>
        </authorList>
    </citation>
    <scope>PHOSPHORYLATION [LARGE SCALE ANALYSIS] AT SER-55</scope>
    <scope>IDENTIFICATION BY MASS SPECTROMETRY</scope>
</reference>
<reference key="6">
    <citation type="journal article" date="2008" name="J. Proteome Res.">
        <title>Phosphoproteome analysis of Drosophila melanogaster embryos.</title>
        <authorList>
            <person name="Zhai B."/>
            <person name="Villen J."/>
            <person name="Beausoleil S.A."/>
            <person name="Mintseris J."/>
            <person name="Gygi S.P."/>
        </authorList>
    </citation>
    <scope>PHOSPHORYLATION [LARGE SCALE ANALYSIS] AT SER-55; SER-81 AND THR-87</scope>
    <scope>IDENTIFICATION BY MASS SPECTROMETRY</scope>
    <source>
        <tissue>Embryo</tissue>
    </source>
</reference>
<reference key="7">
    <citation type="journal article" date="2010" name="Mol. Cell">
        <title>Activation of the MCM2-7 helicase by association with Cdc45 and GINS proteins.</title>
        <authorList>
            <person name="Ilves I."/>
            <person name="Petojevic T."/>
            <person name="Pesavento J.J."/>
            <person name="Botchan M.R."/>
        </authorList>
    </citation>
    <scope>RECONSTITUTION OF THE MCM2-7 COMPLEX</scope>
    <scope>FUNCTION OF THE MCM2-7 COMPLEX</scope>
    <scope>MUTAGENESIS OF LYS-518</scope>
</reference>
<reference key="8">
    <citation type="journal article" date="2015" name="J. Biol. Chem.">
        <title>Characterization of a Drosophila ortholog of the Cdc7 kinase: a role for Cdc7 in endoreplication independent of Chiffon.</title>
        <authorList>
            <person name="Stephenson R."/>
            <person name="Hosler M.R."/>
            <person name="Gavande N.S."/>
            <person name="Ghosh A.K."/>
            <person name="Weake V.M."/>
        </authorList>
    </citation>
    <scope>PHOSPHORYLATION</scope>
</reference>